<reference key="1">
    <citation type="submission" date="2004-01" db="EMBL/GenBank/DDBJ databases">
        <authorList>
            <consortium name="NIH - Zebrafish Gene Collection (ZGC) project"/>
        </authorList>
    </citation>
    <scope>NUCLEOTIDE SEQUENCE [LARGE SCALE MRNA]</scope>
    <source>
        <tissue>Kidney</tissue>
    </source>
</reference>
<keyword id="KW-1185">Reference proteome</keyword>
<name>PKHJ1_DANRE</name>
<feature type="chain" id="PRO_0000309233" description="Pleckstrin homology domain-containing family J member 1">
    <location>
        <begin position="1"/>
        <end position="158"/>
    </location>
</feature>
<feature type="domain" description="PH" evidence="1">
    <location>
        <begin position="15"/>
        <end position="108"/>
    </location>
</feature>
<organism>
    <name type="scientific">Danio rerio</name>
    <name type="common">Zebrafish</name>
    <name type="synonym">Brachydanio rerio</name>
    <dbReference type="NCBI Taxonomy" id="7955"/>
    <lineage>
        <taxon>Eukaryota</taxon>
        <taxon>Metazoa</taxon>
        <taxon>Chordata</taxon>
        <taxon>Craniata</taxon>
        <taxon>Vertebrata</taxon>
        <taxon>Euteleostomi</taxon>
        <taxon>Actinopterygii</taxon>
        <taxon>Neopterygii</taxon>
        <taxon>Teleostei</taxon>
        <taxon>Ostariophysi</taxon>
        <taxon>Cypriniformes</taxon>
        <taxon>Danionidae</taxon>
        <taxon>Danioninae</taxon>
        <taxon>Danio</taxon>
    </lineage>
</organism>
<sequence length="158" mass="18579">MRFNEKELVFLSRQPTQRAAELGMRGPKKGDVVKKRFVKLIVNFLFYFRTDEDEPIGALLLEQCRVEREDLQVFSIVFLDEAERKYLFECDSQEQCAEWIDAIIKASYEFMRKNLVYYRTEIHRLTGKDPLEQYGISDETRFQVNSALPPLPPPPPPT</sequence>
<dbReference type="EMBL" id="BC065626">
    <property type="protein sequence ID" value="AAH65626.1"/>
    <property type="molecule type" value="mRNA"/>
</dbReference>
<dbReference type="RefSeq" id="NP_998453.1">
    <property type="nucleotide sequence ID" value="NM_213288.1"/>
</dbReference>
<dbReference type="SMR" id="Q6P0G8"/>
<dbReference type="FunCoup" id="Q6P0G8">
    <property type="interactions" value="1503"/>
</dbReference>
<dbReference type="STRING" id="7955.ENSDARP00000029972"/>
<dbReference type="PaxDb" id="7955-ENSDARP00000029972"/>
<dbReference type="GeneID" id="406577"/>
<dbReference type="KEGG" id="dre:406577"/>
<dbReference type="AGR" id="ZFIN:ZDB-GENE-040426-2480"/>
<dbReference type="CTD" id="55111"/>
<dbReference type="ZFIN" id="ZDB-GENE-040426-2480">
    <property type="gene designation" value="plekhj1"/>
</dbReference>
<dbReference type="eggNOG" id="KOG0017">
    <property type="taxonomic scope" value="Eukaryota"/>
</dbReference>
<dbReference type="InParanoid" id="Q6P0G8"/>
<dbReference type="OrthoDB" id="10055808at2759"/>
<dbReference type="PhylomeDB" id="Q6P0G8"/>
<dbReference type="PRO" id="PR:Q6P0G8"/>
<dbReference type="Proteomes" id="UP000000437">
    <property type="component" value="Chromosome 2"/>
</dbReference>
<dbReference type="GO" id="GO:0005829">
    <property type="term" value="C:cytosol"/>
    <property type="evidence" value="ECO:0007669"/>
    <property type="project" value="GOC"/>
</dbReference>
<dbReference type="GO" id="GO:0005769">
    <property type="term" value="C:early endosome"/>
    <property type="evidence" value="ECO:0000318"/>
    <property type="project" value="GO_Central"/>
</dbReference>
<dbReference type="GO" id="GO:0055037">
    <property type="term" value="C:recycling endosome"/>
    <property type="evidence" value="ECO:0000318"/>
    <property type="project" value="GO_Central"/>
</dbReference>
<dbReference type="GO" id="GO:0005802">
    <property type="term" value="C:trans-Golgi network"/>
    <property type="evidence" value="ECO:0000318"/>
    <property type="project" value="GO_Central"/>
</dbReference>
<dbReference type="GO" id="GO:0007032">
    <property type="term" value="P:endosome organization"/>
    <property type="evidence" value="ECO:0000318"/>
    <property type="project" value="GO_Central"/>
</dbReference>
<dbReference type="GO" id="GO:0001881">
    <property type="term" value="P:receptor recycling"/>
    <property type="evidence" value="ECO:0000318"/>
    <property type="project" value="GO_Central"/>
</dbReference>
<dbReference type="GO" id="GO:0042147">
    <property type="term" value="P:retrograde transport, endosome to Golgi"/>
    <property type="evidence" value="ECO:0000318"/>
    <property type="project" value="GO_Central"/>
</dbReference>
<dbReference type="CDD" id="cd13258">
    <property type="entry name" value="PH_PLEKHJ1"/>
    <property type="match status" value="1"/>
</dbReference>
<dbReference type="FunFam" id="2.30.29.30:FF:000300">
    <property type="entry name" value="pleckstrin homology domain-containing family J member 1"/>
    <property type="match status" value="1"/>
</dbReference>
<dbReference type="Gene3D" id="2.30.29.30">
    <property type="entry name" value="Pleckstrin-homology domain (PH domain)/Phosphotyrosine-binding domain (PTB)"/>
    <property type="match status" value="1"/>
</dbReference>
<dbReference type="InterPro" id="IPR045188">
    <property type="entry name" value="Boi1/Boi2-like"/>
</dbReference>
<dbReference type="InterPro" id="IPR011993">
    <property type="entry name" value="PH-like_dom_sf"/>
</dbReference>
<dbReference type="InterPro" id="IPR001849">
    <property type="entry name" value="PH_domain"/>
</dbReference>
<dbReference type="PANTHER" id="PTHR22902:SF9">
    <property type="entry name" value="PLECKSTRIN HOMOLOGY DOMAIN-CONTAINING FAMILY J MEMBER 1"/>
    <property type="match status" value="1"/>
</dbReference>
<dbReference type="PANTHER" id="PTHR22902">
    <property type="entry name" value="SESQUIPEDALIAN"/>
    <property type="match status" value="1"/>
</dbReference>
<dbReference type="Pfam" id="PF00169">
    <property type="entry name" value="PH"/>
    <property type="match status" value="1"/>
</dbReference>
<dbReference type="SMART" id="SM00233">
    <property type="entry name" value="PH"/>
    <property type="match status" value="1"/>
</dbReference>
<dbReference type="SUPFAM" id="SSF50729">
    <property type="entry name" value="PH domain-like"/>
    <property type="match status" value="1"/>
</dbReference>
<dbReference type="PROSITE" id="PS50003">
    <property type="entry name" value="PH_DOMAIN"/>
    <property type="match status" value="1"/>
</dbReference>
<gene>
    <name type="primary">plekhj1</name>
    <name type="ORF">zgc:77177</name>
</gene>
<protein>
    <recommendedName>
        <fullName>Pleckstrin homology domain-containing family J member 1</fullName>
        <shortName>PH domain-containing family J member 1</shortName>
    </recommendedName>
</protein>
<accession>Q6P0G8</accession>
<proteinExistence type="evidence at transcript level"/>
<evidence type="ECO:0000255" key="1">
    <source>
        <dbReference type="PROSITE-ProRule" id="PRU00145"/>
    </source>
</evidence>